<accession>B7K4A4</accession>
<name>AMPA_RIPO1</name>
<feature type="chain" id="PRO_1000118451" description="Probable cytosol aminopeptidase">
    <location>
        <begin position="1"/>
        <end position="491"/>
    </location>
</feature>
<feature type="active site" evidence="1">
    <location>
        <position position="272"/>
    </location>
</feature>
<feature type="active site" evidence="1">
    <location>
        <position position="347"/>
    </location>
</feature>
<feature type="binding site" evidence="1">
    <location>
        <position position="260"/>
    </location>
    <ligand>
        <name>Mn(2+)</name>
        <dbReference type="ChEBI" id="CHEBI:29035"/>
        <label>2</label>
    </ligand>
</feature>
<feature type="binding site" evidence="1">
    <location>
        <position position="265"/>
    </location>
    <ligand>
        <name>Mn(2+)</name>
        <dbReference type="ChEBI" id="CHEBI:29035"/>
        <label>1</label>
    </ligand>
</feature>
<feature type="binding site" evidence="1">
    <location>
        <position position="265"/>
    </location>
    <ligand>
        <name>Mn(2+)</name>
        <dbReference type="ChEBI" id="CHEBI:29035"/>
        <label>2</label>
    </ligand>
</feature>
<feature type="binding site" evidence="1">
    <location>
        <position position="284"/>
    </location>
    <ligand>
        <name>Mn(2+)</name>
        <dbReference type="ChEBI" id="CHEBI:29035"/>
        <label>2</label>
    </ligand>
</feature>
<feature type="binding site" evidence="1">
    <location>
        <position position="343"/>
    </location>
    <ligand>
        <name>Mn(2+)</name>
        <dbReference type="ChEBI" id="CHEBI:29035"/>
        <label>1</label>
    </ligand>
</feature>
<feature type="binding site" evidence="1">
    <location>
        <position position="345"/>
    </location>
    <ligand>
        <name>Mn(2+)</name>
        <dbReference type="ChEBI" id="CHEBI:29035"/>
        <label>1</label>
    </ligand>
</feature>
<feature type="binding site" evidence="1">
    <location>
        <position position="345"/>
    </location>
    <ligand>
        <name>Mn(2+)</name>
        <dbReference type="ChEBI" id="CHEBI:29035"/>
        <label>2</label>
    </ligand>
</feature>
<evidence type="ECO:0000255" key="1">
    <source>
        <dbReference type="HAMAP-Rule" id="MF_00181"/>
    </source>
</evidence>
<dbReference type="EC" id="3.4.11.1" evidence="1"/>
<dbReference type="EC" id="3.4.11.10" evidence="1"/>
<dbReference type="EMBL" id="CP001287">
    <property type="protein sequence ID" value="ACK67810.1"/>
    <property type="molecule type" value="Genomic_DNA"/>
</dbReference>
<dbReference type="RefSeq" id="WP_012597067.1">
    <property type="nucleotide sequence ID" value="NC_011726.1"/>
</dbReference>
<dbReference type="SMR" id="B7K4A4"/>
<dbReference type="STRING" id="41431.PCC8801_3861"/>
<dbReference type="MEROPS" id="M17.A03"/>
<dbReference type="KEGG" id="cyp:PCC8801_3861"/>
<dbReference type="eggNOG" id="COG0260">
    <property type="taxonomic scope" value="Bacteria"/>
</dbReference>
<dbReference type="HOGENOM" id="CLU_013734_5_1_3"/>
<dbReference type="OrthoDB" id="9809354at2"/>
<dbReference type="Proteomes" id="UP000008204">
    <property type="component" value="Chromosome"/>
</dbReference>
<dbReference type="GO" id="GO:0005737">
    <property type="term" value="C:cytoplasm"/>
    <property type="evidence" value="ECO:0007669"/>
    <property type="project" value="UniProtKB-SubCell"/>
</dbReference>
<dbReference type="GO" id="GO:0030145">
    <property type="term" value="F:manganese ion binding"/>
    <property type="evidence" value="ECO:0007669"/>
    <property type="project" value="UniProtKB-UniRule"/>
</dbReference>
<dbReference type="GO" id="GO:0070006">
    <property type="term" value="F:metalloaminopeptidase activity"/>
    <property type="evidence" value="ECO:0007669"/>
    <property type="project" value="InterPro"/>
</dbReference>
<dbReference type="GO" id="GO:0006508">
    <property type="term" value="P:proteolysis"/>
    <property type="evidence" value="ECO:0007669"/>
    <property type="project" value="UniProtKB-KW"/>
</dbReference>
<dbReference type="CDD" id="cd00433">
    <property type="entry name" value="Peptidase_M17"/>
    <property type="match status" value="1"/>
</dbReference>
<dbReference type="Gene3D" id="3.40.220.10">
    <property type="entry name" value="Leucine Aminopeptidase, subunit E, domain 1"/>
    <property type="match status" value="1"/>
</dbReference>
<dbReference type="Gene3D" id="3.40.630.10">
    <property type="entry name" value="Zn peptidases"/>
    <property type="match status" value="1"/>
</dbReference>
<dbReference type="HAMAP" id="MF_00181">
    <property type="entry name" value="Cytosol_peptidase_M17"/>
    <property type="match status" value="1"/>
</dbReference>
<dbReference type="InterPro" id="IPR011356">
    <property type="entry name" value="Leucine_aapep/pepB"/>
</dbReference>
<dbReference type="InterPro" id="IPR043472">
    <property type="entry name" value="Macro_dom-like"/>
</dbReference>
<dbReference type="InterPro" id="IPR000819">
    <property type="entry name" value="Peptidase_M17_C"/>
</dbReference>
<dbReference type="InterPro" id="IPR023042">
    <property type="entry name" value="Peptidase_M17_leu_NH2_pept"/>
</dbReference>
<dbReference type="InterPro" id="IPR008283">
    <property type="entry name" value="Peptidase_M17_N"/>
</dbReference>
<dbReference type="NCBIfam" id="NF002073">
    <property type="entry name" value="PRK00913.1-2"/>
    <property type="match status" value="1"/>
</dbReference>
<dbReference type="NCBIfam" id="NF002074">
    <property type="entry name" value="PRK00913.1-4"/>
    <property type="match status" value="1"/>
</dbReference>
<dbReference type="NCBIfam" id="NF002076">
    <property type="entry name" value="PRK00913.2-3"/>
    <property type="match status" value="1"/>
</dbReference>
<dbReference type="NCBIfam" id="NF002083">
    <property type="entry name" value="PRK00913.3-5"/>
    <property type="match status" value="1"/>
</dbReference>
<dbReference type="PANTHER" id="PTHR11963:SF23">
    <property type="entry name" value="CYTOSOL AMINOPEPTIDASE"/>
    <property type="match status" value="1"/>
</dbReference>
<dbReference type="PANTHER" id="PTHR11963">
    <property type="entry name" value="LEUCINE AMINOPEPTIDASE-RELATED"/>
    <property type="match status" value="1"/>
</dbReference>
<dbReference type="Pfam" id="PF00883">
    <property type="entry name" value="Peptidase_M17"/>
    <property type="match status" value="1"/>
</dbReference>
<dbReference type="Pfam" id="PF02789">
    <property type="entry name" value="Peptidase_M17_N"/>
    <property type="match status" value="1"/>
</dbReference>
<dbReference type="PRINTS" id="PR00481">
    <property type="entry name" value="LAMNOPPTDASE"/>
</dbReference>
<dbReference type="SUPFAM" id="SSF52949">
    <property type="entry name" value="Macro domain-like"/>
    <property type="match status" value="1"/>
</dbReference>
<dbReference type="SUPFAM" id="SSF53187">
    <property type="entry name" value="Zn-dependent exopeptidases"/>
    <property type="match status" value="1"/>
</dbReference>
<dbReference type="PROSITE" id="PS00631">
    <property type="entry name" value="CYTOSOL_AP"/>
    <property type="match status" value="1"/>
</dbReference>
<reference key="1">
    <citation type="journal article" date="2011" name="MBio">
        <title>Novel metabolic attributes of the genus Cyanothece, comprising a group of unicellular nitrogen-fixing Cyanobacteria.</title>
        <authorList>
            <person name="Bandyopadhyay A."/>
            <person name="Elvitigala T."/>
            <person name="Welsh E."/>
            <person name="Stockel J."/>
            <person name="Liberton M."/>
            <person name="Min H."/>
            <person name="Sherman L.A."/>
            <person name="Pakrasi H.B."/>
        </authorList>
    </citation>
    <scope>NUCLEOTIDE SEQUENCE [LARGE SCALE GENOMIC DNA]</scope>
    <source>
        <strain>PCC 8801 / RF-1</strain>
    </source>
</reference>
<comment type="function">
    <text evidence="1">Presumably involved in the processing and regular turnover of intracellular proteins. Catalyzes the removal of unsubstituted N-terminal amino acids from various peptides.</text>
</comment>
<comment type="catalytic activity">
    <reaction evidence="1">
        <text>Release of an N-terminal amino acid, Xaa-|-Yaa-, in which Xaa is preferably Leu, but may be other amino acids including Pro although not Arg or Lys, and Yaa may be Pro. Amino acid amides and methyl esters are also readily hydrolyzed, but rates on arylamides are exceedingly low.</text>
        <dbReference type="EC" id="3.4.11.1"/>
    </reaction>
</comment>
<comment type="catalytic activity">
    <reaction evidence="1">
        <text>Release of an N-terminal amino acid, preferentially leucine, but not glutamic or aspartic acids.</text>
        <dbReference type="EC" id="3.4.11.10"/>
    </reaction>
</comment>
<comment type="cofactor">
    <cofactor evidence="1">
        <name>Mn(2+)</name>
        <dbReference type="ChEBI" id="CHEBI:29035"/>
    </cofactor>
    <text evidence="1">Binds 2 manganese ions per subunit.</text>
</comment>
<comment type="subcellular location">
    <subcellularLocation>
        <location evidence="1">Cytoplasm</location>
    </subcellularLocation>
</comment>
<comment type="similarity">
    <text evidence="1">Belongs to the peptidase M17 family.</text>
</comment>
<gene>
    <name evidence="1" type="primary">pepA</name>
    <name type="ordered locus">PCC8801_3861</name>
</gene>
<protein>
    <recommendedName>
        <fullName evidence="1">Probable cytosol aminopeptidase</fullName>
        <ecNumber evidence="1">3.4.11.1</ecNumber>
    </recommendedName>
    <alternativeName>
        <fullName evidence="1">Leucine aminopeptidase</fullName>
        <shortName evidence="1">LAP</shortName>
        <ecNumber evidence="1">3.4.11.10</ecNumber>
    </alternativeName>
    <alternativeName>
        <fullName evidence="1">Leucyl aminopeptidase</fullName>
    </alternativeName>
</protein>
<sequence>MDIRGINTPFLDWTGDALALGIFEEGTQITGELSQLDGKLTGTVQELIQEAEFEGKAGTKAVTRVGSNSPIRKVMLVGLGKAEDLQLNSVREAAGAIARLAKLEKVKTLGINLPVVNNDGAKTASAIAEGILLALHQDNRFKSDPQENALKLENVDILGCGEATEAINRAQTLSSGVILARELVNSPANTITPVTFAETAQEIAQTSGLTCEILEQEDCEKLGMGSFLGVAKASDLPPKFIHLTYKPSGTPKKKLAIVGKSLTFDCGGLNLKVAGASIEMMKMDMGGGAATLGAAKVIGQLKPDVEVHFICAATENMISGRAIHPGDILTASNGKTIEVNNTDAEGRLTLADALVFAEKLEVDAIVDLATLTGACIIALGDNISGLWSTDQTLADQLKAAAETAGEKFWQMPLEEKYFEGLKSPIADMKNTGPRAGGSITAALFLKQFIKDTPWAHLDIAGPVWAEKENGLNNVGGTGFPVRTLVNWVLSF</sequence>
<organism>
    <name type="scientific">Rippkaea orientalis (strain PCC 8801 / RF-1)</name>
    <name type="common">Cyanothece sp. (strain PCC 8801)</name>
    <dbReference type="NCBI Taxonomy" id="41431"/>
    <lineage>
        <taxon>Bacteria</taxon>
        <taxon>Bacillati</taxon>
        <taxon>Cyanobacteriota</taxon>
        <taxon>Cyanophyceae</taxon>
        <taxon>Oscillatoriophycideae</taxon>
        <taxon>Chroococcales</taxon>
        <taxon>Aphanothecaceae</taxon>
        <taxon>Rippkaea</taxon>
        <taxon>Rippkaea orientalis</taxon>
    </lineage>
</organism>
<keyword id="KW-0031">Aminopeptidase</keyword>
<keyword id="KW-0963">Cytoplasm</keyword>
<keyword id="KW-0378">Hydrolase</keyword>
<keyword id="KW-0464">Manganese</keyword>
<keyword id="KW-0479">Metal-binding</keyword>
<keyword id="KW-0645">Protease</keyword>
<keyword id="KW-1185">Reference proteome</keyword>
<proteinExistence type="inferred from homology"/>